<evidence type="ECO:0000250" key="1">
    <source>
        <dbReference type="UniProtKB" id="P84667"/>
    </source>
</evidence>
<evidence type="ECO:0000255" key="2"/>
<evidence type="ECO:0000269" key="3">
    <source>
    </source>
</evidence>
<evidence type="ECO:0000305" key="4"/>
<accession>P85864</accession>
<comment type="function">
    <text evidence="1">Myoactive.</text>
</comment>
<comment type="subcellular location">
    <subcellularLocation>
        <location evidence="4">Secreted</location>
    </subcellularLocation>
</comment>
<comment type="tissue specificity">
    <text evidence="3">Found in the abdominal ganglia and perisympathetic organs. Not detected in the thoracic ganglia, subesophageal ganglion, corpora cardiaca, corpora allata, hypocerebral ganglion or frontal ganglion.</text>
</comment>
<comment type="mass spectrometry"/>
<comment type="similarity">
    <text evidence="2">Belongs to the pyrokinin family.</text>
</comment>
<protein>
    <recommendedName>
        <fullName>Pyrokinin</fullName>
    </recommendedName>
    <alternativeName>
        <fullName>Capa-Pk</fullName>
    </alternativeName>
    <alternativeName>
        <fullName>Scg-PVK-3</fullName>
    </alternativeName>
</protein>
<organism>
    <name type="scientific">Schistocerca gregaria</name>
    <name type="common">Desert locust</name>
    <name type="synonym">Gryllus gregarius</name>
    <dbReference type="NCBI Taxonomy" id="7010"/>
    <lineage>
        <taxon>Eukaryota</taxon>
        <taxon>Metazoa</taxon>
        <taxon>Ecdysozoa</taxon>
        <taxon>Arthropoda</taxon>
        <taxon>Hexapoda</taxon>
        <taxon>Insecta</taxon>
        <taxon>Pterygota</taxon>
        <taxon>Neoptera</taxon>
        <taxon>Polyneoptera</taxon>
        <taxon>Orthoptera</taxon>
        <taxon>Caelifera</taxon>
        <taxon>Acrididea</taxon>
        <taxon>Acridomorpha</taxon>
        <taxon>Acridoidea</taxon>
        <taxon>Acrididae</taxon>
        <taxon>Cyrtacanthacridinae</taxon>
        <taxon>Schistocerca</taxon>
    </lineage>
</organism>
<proteinExistence type="evidence at protein level"/>
<dbReference type="GO" id="GO:0005576">
    <property type="term" value="C:extracellular region"/>
    <property type="evidence" value="ECO:0007669"/>
    <property type="project" value="UniProtKB-SubCell"/>
</dbReference>
<dbReference type="GO" id="GO:0007218">
    <property type="term" value="P:neuropeptide signaling pathway"/>
    <property type="evidence" value="ECO:0007669"/>
    <property type="project" value="UniProtKB-KW"/>
</dbReference>
<feature type="peptide" id="PRO_0000343528" description="Pyrokinin" evidence="3">
    <location>
        <begin position="1"/>
        <end position="18"/>
    </location>
</feature>
<feature type="modified residue" description="Valine amide" evidence="3">
    <location>
        <position position="18"/>
    </location>
</feature>
<name>PPK_SCHGR</name>
<reference evidence="4" key="1">
    <citation type="journal article" date="2003" name="Biochem. Biophys. Res. Commun.">
        <title>Mass spectrometric analysis of the perisympathetic organs in locusts: identification of novel periviscerokinins.</title>
        <authorList>
            <person name="Clynen E."/>
            <person name="Huybrechts J."/>
            <person name="De Loof A."/>
            <person name="Schoofs L."/>
        </authorList>
    </citation>
    <scope>PROTEIN SEQUENCE</scope>
    <scope>TISSUE SPECIFICITY</scope>
    <scope>MASS SPECTROMETRY</scope>
    <scope>AMIDATION AT VAL-18</scope>
    <source>
        <tissue evidence="3">Abdominal perisympathetic organs</tissue>
    </source>
</reference>
<sequence>DGAETPGAAASLWFGPRV</sequence>
<keyword id="KW-0027">Amidation</keyword>
<keyword id="KW-0903">Direct protein sequencing</keyword>
<keyword id="KW-0527">Neuropeptide</keyword>
<keyword id="KW-0964">Secreted</keyword>